<keyword id="KW-0963">Cytoplasm</keyword>
<keyword id="KW-0342">GTP-binding</keyword>
<keyword id="KW-0396">Initiation factor</keyword>
<keyword id="KW-0547">Nucleotide-binding</keyword>
<keyword id="KW-0648">Protein biosynthesis</keyword>
<protein>
    <recommendedName>
        <fullName evidence="2">Translation initiation factor IF-2</fullName>
    </recommendedName>
</protein>
<feature type="chain" id="PRO_1000075619" description="Translation initiation factor IF-2">
    <location>
        <begin position="1"/>
        <end position="893"/>
    </location>
</feature>
<feature type="domain" description="tr-type G">
    <location>
        <begin position="393"/>
        <end position="562"/>
    </location>
</feature>
<feature type="region of interest" description="Disordered" evidence="3">
    <location>
        <begin position="135"/>
        <end position="169"/>
    </location>
</feature>
<feature type="region of interest" description="Disordered" evidence="3">
    <location>
        <begin position="201"/>
        <end position="300"/>
    </location>
</feature>
<feature type="region of interest" description="G1" evidence="1">
    <location>
        <begin position="402"/>
        <end position="409"/>
    </location>
</feature>
<feature type="region of interest" description="G2" evidence="1">
    <location>
        <begin position="427"/>
        <end position="431"/>
    </location>
</feature>
<feature type="region of interest" description="G3" evidence="1">
    <location>
        <begin position="448"/>
        <end position="451"/>
    </location>
</feature>
<feature type="region of interest" description="G4" evidence="1">
    <location>
        <begin position="502"/>
        <end position="505"/>
    </location>
</feature>
<feature type="region of interest" description="G5" evidence="1">
    <location>
        <begin position="538"/>
        <end position="540"/>
    </location>
</feature>
<feature type="compositionally biased region" description="Basic and acidic residues" evidence="3">
    <location>
        <begin position="201"/>
        <end position="224"/>
    </location>
</feature>
<feature type="compositionally biased region" description="Low complexity" evidence="3">
    <location>
        <begin position="251"/>
        <end position="265"/>
    </location>
</feature>
<feature type="binding site" evidence="2">
    <location>
        <begin position="402"/>
        <end position="409"/>
    </location>
    <ligand>
        <name>GTP</name>
        <dbReference type="ChEBI" id="CHEBI:37565"/>
    </ligand>
</feature>
<feature type="binding site" evidence="2">
    <location>
        <begin position="448"/>
        <end position="452"/>
    </location>
    <ligand>
        <name>GTP</name>
        <dbReference type="ChEBI" id="CHEBI:37565"/>
    </ligand>
</feature>
<feature type="binding site" evidence="2">
    <location>
        <begin position="502"/>
        <end position="505"/>
    </location>
    <ligand>
        <name>GTP</name>
        <dbReference type="ChEBI" id="CHEBI:37565"/>
    </ligand>
</feature>
<dbReference type="EMBL" id="CP000931">
    <property type="protein sequence ID" value="ABZ77694.1"/>
    <property type="molecule type" value="Genomic_DNA"/>
</dbReference>
<dbReference type="RefSeq" id="WP_012278218.1">
    <property type="nucleotide sequence ID" value="NC_010334.1"/>
</dbReference>
<dbReference type="SMR" id="B0TQA2"/>
<dbReference type="STRING" id="458817.Shal_3147"/>
<dbReference type="KEGG" id="shl:Shal_3147"/>
<dbReference type="eggNOG" id="COG0532">
    <property type="taxonomic scope" value="Bacteria"/>
</dbReference>
<dbReference type="HOGENOM" id="CLU_006301_6_3_6"/>
<dbReference type="OrthoDB" id="9811804at2"/>
<dbReference type="Proteomes" id="UP000001317">
    <property type="component" value="Chromosome"/>
</dbReference>
<dbReference type="GO" id="GO:0005829">
    <property type="term" value="C:cytosol"/>
    <property type="evidence" value="ECO:0007669"/>
    <property type="project" value="TreeGrafter"/>
</dbReference>
<dbReference type="GO" id="GO:0005525">
    <property type="term" value="F:GTP binding"/>
    <property type="evidence" value="ECO:0007669"/>
    <property type="project" value="UniProtKB-KW"/>
</dbReference>
<dbReference type="GO" id="GO:0003924">
    <property type="term" value="F:GTPase activity"/>
    <property type="evidence" value="ECO:0007669"/>
    <property type="project" value="UniProtKB-UniRule"/>
</dbReference>
<dbReference type="GO" id="GO:0097216">
    <property type="term" value="F:guanosine tetraphosphate binding"/>
    <property type="evidence" value="ECO:0007669"/>
    <property type="project" value="UniProtKB-ARBA"/>
</dbReference>
<dbReference type="GO" id="GO:0003743">
    <property type="term" value="F:translation initiation factor activity"/>
    <property type="evidence" value="ECO:0007669"/>
    <property type="project" value="UniProtKB-UniRule"/>
</dbReference>
<dbReference type="CDD" id="cd01887">
    <property type="entry name" value="IF2_eIF5B"/>
    <property type="match status" value="1"/>
</dbReference>
<dbReference type="CDD" id="cd03702">
    <property type="entry name" value="IF2_mtIF2_II"/>
    <property type="match status" value="1"/>
</dbReference>
<dbReference type="CDD" id="cd03692">
    <property type="entry name" value="mtIF2_IVc"/>
    <property type="match status" value="1"/>
</dbReference>
<dbReference type="FunFam" id="2.40.30.10:FF:000007">
    <property type="entry name" value="Translation initiation factor IF-2"/>
    <property type="match status" value="1"/>
</dbReference>
<dbReference type="FunFam" id="2.40.30.10:FF:000008">
    <property type="entry name" value="Translation initiation factor IF-2"/>
    <property type="match status" value="1"/>
</dbReference>
<dbReference type="FunFam" id="3.40.50.10050:FF:000001">
    <property type="entry name" value="Translation initiation factor IF-2"/>
    <property type="match status" value="1"/>
</dbReference>
<dbReference type="FunFam" id="3.40.50.300:FF:000019">
    <property type="entry name" value="Translation initiation factor IF-2"/>
    <property type="match status" value="1"/>
</dbReference>
<dbReference type="Gene3D" id="3.40.50.300">
    <property type="entry name" value="P-loop containing nucleotide triphosphate hydrolases"/>
    <property type="match status" value="1"/>
</dbReference>
<dbReference type="Gene3D" id="3.30.56.50">
    <property type="entry name" value="Putative DNA-binding domain, N-terminal subdomain of bacterial translation initiation factor IF2"/>
    <property type="match status" value="1"/>
</dbReference>
<dbReference type="Gene3D" id="2.40.30.10">
    <property type="entry name" value="Translation factors"/>
    <property type="match status" value="2"/>
</dbReference>
<dbReference type="Gene3D" id="3.40.50.10050">
    <property type="entry name" value="Translation initiation factor IF- 2, domain 3"/>
    <property type="match status" value="1"/>
</dbReference>
<dbReference type="HAMAP" id="MF_00100_B">
    <property type="entry name" value="IF_2_B"/>
    <property type="match status" value="1"/>
</dbReference>
<dbReference type="InterPro" id="IPR009061">
    <property type="entry name" value="DNA-bd_dom_put_sf"/>
</dbReference>
<dbReference type="InterPro" id="IPR053905">
    <property type="entry name" value="EF-G-like_DII"/>
</dbReference>
<dbReference type="InterPro" id="IPR004161">
    <property type="entry name" value="EFTu-like_2"/>
</dbReference>
<dbReference type="InterPro" id="IPR013575">
    <property type="entry name" value="IF2_assoc_dom_bac"/>
</dbReference>
<dbReference type="InterPro" id="IPR044145">
    <property type="entry name" value="IF2_II"/>
</dbReference>
<dbReference type="InterPro" id="IPR006847">
    <property type="entry name" value="IF2_N"/>
</dbReference>
<dbReference type="InterPro" id="IPR027417">
    <property type="entry name" value="P-loop_NTPase"/>
</dbReference>
<dbReference type="InterPro" id="IPR005225">
    <property type="entry name" value="Small_GTP-bd"/>
</dbReference>
<dbReference type="InterPro" id="IPR000795">
    <property type="entry name" value="T_Tr_GTP-bd_dom"/>
</dbReference>
<dbReference type="InterPro" id="IPR000178">
    <property type="entry name" value="TF_IF2_bacterial-like"/>
</dbReference>
<dbReference type="InterPro" id="IPR015760">
    <property type="entry name" value="TIF_IF2"/>
</dbReference>
<dbReference type="InterPro" id="IPR023115">
    <property type="entry name" value="TIF_IF2_dom3"/>
</dbReference>
<dbReference type="InterPro" id="IPR036925">
    <property type="entry name" value="TIF_IF2_dom3_sf"/>
</dbReference>
<dbReference type="InterPro" id="IPR009000">
    <property type="entry name" value="Transl_B-barrel_sf"/>
</dbReference>
<dbReference type="NCBIfam" id="TIGR00487">
    <property type="entry name" value="IF-2"/>
    <property type="match status" value="1"/>
</dbReference>
<dbReference type="NCBIfam" id="TIGR00231">
    <property type="entry name" value="small_GTP"/>
    <property type="match status" value="1"/>
</dbReference>
<dbReference type="PANTHER" id="PTHR43381:SF5">
    <property type="entry name" value="TR-TYPE G DOMAIN-CONTAINING PROTEIN"/>
    <property type="match status" value="1"/>
</dbReference>
<dbReference type="PANTHER" id="PTHR43381">
    <property type="entry name" value="TRANSLATION INITIATION FACTOR IF-2-RELATED"/>
    <property type="match status" value="1"/>
</dbReference>
<dbReference type="Pfam" id="PF22042">
    <property type="entry name" value="EF-G_D2"/>
    <property type="match status" value="1"/>
</dbReference>
<dbReference type="Pfam" id="PF00009">
    <property type="entry name" value="GTP_EFTU"/>
    <property type="match status" value="1"/>
</dbReference>
<dbReference type="Pfam" id="PF03144">
    <property type="entry name" value="GTP_EFTU_D2"/>
    <property type="match status" value="1"/>
</dbReference>
<dbReference type="Pfam" id="PF11987">
    <property type="entry name" value="IF-2"/>
    <property type="match status" value="1"/>
</dbReference>
<dbReference type="Pfam" id="PF08364">
    <property type="entry name" value="IF2_assoc"/>
    <property type="match status" value="1"/>
</dbReference>
<dbReference type="Pfam" id="PF04760">
    <property type="entry name" value="IF2_N"/>
    <property type="match status" value="2"/>
</dbReference>
<dbReference type="SUPFAM" id="SSF52156">
    <property type="entry name" value="Initiation factor IF2/eIF5b, domain 3"/>
    <property type="match status" value="1"/>
</dbReference>
<dbReference type="SUPFAM" id="SSF52540">
    <property type="entry name" value="P-loop containing nucleoside triphosphate hydrolases"/>
    <property type="match status" value="1"/>
</dbReference>
<dbReference type="SUPFAM" id="SSF46955">
    <property type="entry name" value="Putative DNA-binding domain"/>
    <property type="match status" value="1"/>
</dbReference>
<dbReference type="SUPFAM" id="SSF50447">
    <property type="entry name" value="Translation proteins"/>
    <property type="match status" value="2"/>
</dbReference>
<dbReference type="PROSITE" id="PS51722">
    <property type="entry name" value="G_TR_2"/>
    <property type="match status" value="1"/>
</dbReference>
<dbReference type="PROSITE" id="PS01176">
    <property type="entry name" value="IF2"/>
    <property type="match status" value="1"/>
</dbReference>
<evidence type="ECO:0000250" key="1"/>
<evidence type="ECO:0000255" key="2">
    <source>
        <dbReference type="HAMAP-Rule" id="MF_00100"/>
    </source>
</evidence>
<evidence type="ECO:0000256" key="3">
    <source>
        <dbReference type="SAM" id="MobiDB-lite"/>
    </source>
</evidence>
<sequence length="893" mass="95663">MADTTVDKLATEVGKSTDRLVEQFSQAGIKKSANDTVSESEKQQLLDFLKKQHGGDAAPTKMTLQRKSVSTLSVAGSGGQSKDVKVEVRKKRTFVKRDEAAEAELAAAAKAEEAKAAEVAKTAAEAKAKLDAEAKAKAKADAEAKAKAKVLTEKPVQESAEDKAAKAEEAKLLAAQDAAAKSKADEDVAAAAEVARRLAEENEKRWAEEEKARKEAEKTVDHHVTTSTEARAAEDTADANAEKRGRRPRKPSANAGNNANANAGAGKPGGKGKRGKDNRRDSRNSRNSRNNRSVAPESMDHAFTKPAAVVKADVSIGETVSVSELASKMSIKATEIIKQMMKMGSMVTINQVLDQETAQLVAEEMGHKVVLTRENELEHQVLADRNGDVLAESRAPVVTIMGHVDHGKTSLLDYIRRAKVASGEAGGITQHIGAYHVETENGMITFLDTPGHAAFTAMRARGAKATDIVILVVAADDGVMPQTIEAIQHAKAGGVPLIVAVNKMDKPEADPDRVKSELSQHGVMSEDWGGNNMFVNVSAKTGAGIDELLEGILLEAEVLELKAIKEGMAAGVVVESKLDKGRGPVATVLVQEGTLKQGDIVLCGLEYGKVRAMRDENGKAITEAGPSIPVEILGLSGVPSAGDEATVVRDERKAREVALYRQGKFRDVKLARQQKSKLENMFANMTEGEVEELNIVLKADVQGSLEAICDSLNALSTAEVKVNIIARGVGGLTETDATLAAASNAIMVGFNVRADAQARKVVESESVDLRYYSIIYQLIDEVRDAMSGLLAPEFKQEIIGLAEVRDVFKSPKIGAIAGCMVTEGTIKRSAPIRVLRDNIVIYEGELESLRRFKDDVSDVRNGMECGIGVKNYNDVRVGDQIEVFETVEIARTL</sequence>
<name>IF2_SHEHH</name>
<gene>
    <name evidence="2" type="primary">infB</name>
    <name type="ordered locus">Shal_3147</name>
</gene>
<comment type="function">
    <text evidence="2">One of the essential components for the initiation of protein synthesis. Protects formylmethionyl-tRNA from spontaneous hydrolysis and promotes its binding to the 30S ribosomal subunits. Also involved in the hydrolysis of GTP during the formation of the 70S ribosomal complex.</text>
</comment>
<comment type="subcellular location">
    <subcellularLocation>
        <location evidence="2">Cytoplasm</location>
    </subcellularLocation>
</comment>
<comment type="similarity">
    <text evidence="2">Belongs to the TRAFAC class translation factor GTPase superfamily. Classic translation factor GTPase family. IF-2 subfamily.</text>
</comment>
<proteinExistence type="inferred from homology"/>
<organism>
    <name type="scientific">Shewanella halifaxensis (strain HAW-EB4)</name>
    <dbReference type="NCBI Taxonomy" id="458817"/>
    <lineage>
        <taxon>Bacteria</taxon>
        <taxon>Pseudomonadati</taxon>
        <taxon>Pseudomonadota</taxon>
        <taxon>Gammaproteobacteria</taxon>
        <taxon>Alteromonadales</taxon>
        <taxon>Shewanellaceae</taxon>
        <taxon>Shewanella</taxon>
    </lineage>
</organism>
<reference key="1">
    <citation type="submission" date="2008-01" db="EMBL/GenBank/DDBJ databases">
        <title>Complete sequence of Shewanella halifaxensis HAW-EB4.</title>
        <authorList>
            <consortium name="US DOE Joint Genome Institute"/>
            <person name="Copeland A."/>
            <person name="Lucas S."/>
            <person name="Lapidus A."/>
            <person name="Glavina del Rio T."/>
            <person name="Dalin E."/>
            <person name="Tice H."/>
            <person name="Bruce D."/>
            <person name="Goodwin L."/>
            <person name="Pitluck S."/>
            <person name="Sims D."/>
            <person name="Brettin T."/>
            <person name="Detter J.C."/>
            <person name="Han C."/>
            <person name="Kuske C.R."/>
            <person name="Schmutz J."/>
            <person name="Larimer F."/>
            <person name="Land M."/>
            <person name="Hauser L."/>
            <person name="Kyrpides N."/>
            <person name="Kim E."/>
            <person name="Zhao J.-S."/>
            <person name="Richardson P."/>
        </authorList>
    </citation>
    <scope>NUCLEOTIDE SEQUENCE [LARGE SCALE GENOMIC DNA]</scope>
    <source>
        <strain>HAW-EB4</strain>
    </source>
</reference>
<accession>B0TQA2</accession>